<proteinExistence type="inferred from homology"/>
<name>TTCA_ANADE</name>
<evidence type="ECO:0000255" key="1">
    <source>
        <dbReference type="HAMAP-Rule" id="MF_01850"/>
    </source>
</evidence>
<evidence type="ECO:0000256" key="2">
    <source>
        <dbReference type="SAM" id="MobiDB-lite"/>
    </source>
</evidence>
<dbReference type="EC" id="2.8.1.-" evidence="1"/>
<dbReference type="EMBL" id="CP000251">
    <property type="protein sequence ID" value="ABC80678.1"/>
    <property type="molecule type" value="Genomic_DNA"/>
</dbReference>
<dbReference type="RefSeq" id="WP_011419961.1">
    <property type="nucleotide sequence ID" value="NC_007760.1"/>
</dbReference>
<dbReference type="SMR" id="Q2IPE3"/>
<dbReference type="STRING" id="290397.Adeh_0903"/>
<dbReference type="KEGG" id="ade:Adeh_0903"/>
<dbReference type="eggNOG" id="COG0037">
    <property type="taxonomic scope" value="Bacteria"/>
</dbReference>
<dbReference type="HOGENOM" id="CLU_026481_0_0_7"/>
<dbReference type="OrthoDB" id="9801054at2"/>
<dbReference type="Proteomes" id="UP000001935">
    <property type="component" value="Chromosome"/>
</dbReference>
<dbReference type="GO" id="GO:0005737">
    <property type="term" value="C:cytoplasm"/>
    <property type="evidence" value="ECO:0007669"/>
    <property type="project" value="UniProtKB-SubCell"/>
</dbReference>
<dbReference type="GO" id="GO:0051539">
    <property type="term" value="F:4 iron, 4 sulfur cluster binding"/>
    <property type="evidence" value="ECO:0007669"/>
    <property type="project" value="UniProtKB-KW"/>
</dbReference>
<dbReference type="GO" id="GO:0005524">
    <property type="term" value="F:ATP binding"/>
    <property type="evidence" value="ECO:0007669"/>
    <property type="project" value="UniProtKB-KW"/>
</dbReference>
<dbReference type="GO" id="GO:0046872">
    <property type="term" value="F:metal ion binding"/>
    <property type="evidence" value="ECO:0007669"/>
    <property type="project" value="UniProtKB-KW"/>
</dbReference>
<dbReference type="GO" id="GO:0016740">
    <property type="term" value="F:transferase activity"/>
    <property type="evidence" value="ECO:0007669"/>
    <property type="project" value="UniProtKB-KW"/>
</dbReference>
<dbReference type="GO" id="GO:0000049">
    <property type="term" value="F:tRNA binding"/>
    <property type="evidence" value="ECO:0007669"/>
    <property type="project" value="UniProtKB-KW"/>
</dbReference>
<dbReference type="GO" id="GO:0006400">
    <property type="term" value="P:tRNA modification"/>
    <property type="evidence" value="ECO:0007669"/>
    <property type="project" value="UniProtKB-ARBA"/>
</dbReference>
<dbReference type="CDD" id="cd24138">
    <property type="entry name" value="TtcA-like"/>
    <property type="match status" value="1"/>
</dbReference>
<dbReference type="Gene3D" id="3.40.50.620">
    <property type="entry name" value="HUPs"/>
    <property type="match status" value="1"/>
</dbReference>
<dbReference type="HAMAP" id="MF_01850">
    <property type="entry name" value="TtcA"/>
    <property type="match status" value="1"/>
</dbReference>
<dbReference type="InterPro" id="IPR014729">
    <property type="entry name" value="Rossmann-like_a/b/a_fold"/>
</dbReference>
<dbReference type="InterPro" id="IPR011063">
    <property type="entry name" value="TilS/TtcA_N"/>
</dbReference>
<dbReference type="InterPro" id="IPR012089">
    <property type="entry name" value="tRNA_Cyd_32_2_STrfase"/>
</dbReference>
<dbReference type="InterPro" id="IPR035107">
    <property type="entry name" value="tRNA_thiolation_TtcA_Ctu1"/>
</dbReference>
<dbReference type="NCBIfam" id="NF007972">
    <property type="entry name" value="PRK10696.1"/>
    <property type="match status" value="1"/>
</dbReference>
<dbReference type="PANTHER" id="PTHR43686:SF1">
    <property type="entry name" value="AMINOTRAN_5 DOMAIN-CONTAINING PROTEIN"/>
    <property type="match status" value="1"/>
</dbReference>
<dbReference type="PANTHER" id="PTHR43686">
    <property type="entry name" value="SULFURTRANSFERASE-RELATED"/>
    <property type="match status" value="1"/>
</dbReference>
<dbReference type="Pfam" id="PF01171">
    <property type="entry name" value="ATP_bind_3"/>
    <property type="match status" value="1"/>
</dbReference>
<dbReference type="PIRSF" id="PIRSF004976">
    <property type="entry name" value="ATPase_YdaO"/>
    <property type="match status" value="1"/>
</dbReference>
<dbReference type="SUPFAM" id="SSF52402">
    <property type="entry name" value="Adenine nucleotide alpha hydrolases-like"/>
    <property type="match status" value="1"/>
</dbReference>
<sequence length="290" mass="32067">MQQIHRLERKLLRATAEAIRDFDLVSQGDRIMVAVSGGKDSYTLLHLLMRLRERAPIDFDLVAVNLDQGQPGFPAHVVEDHLRSLGVPYRMLQRDTYSVVRRLVPEGKTTCPVCSRLRRGVLYNAAVEMGCTKIALGHHRDDLVETLLLSALYSGALKSMPPKLRSRDGRNVVIRPLCYAAEEDVAAFAEAMRFPIVPCDLCGSQPNLRRKRVKRLLAELSAEHPAVKGNLLHALGHVVPSHLLDRDLHRQLADATGRDPWLDAEDEEAEDCGEPAGDGVVSLGGARGGR</sequence>
<feature type="chain" id="PRO_0000348659" description="tRNA-cytidine(32) 2-sulfurtransferase">
    <location>
        <begin position="1"/>
        <end position="290"/>
    </location>
</feature>
<feature type="region of interest" description="Disordered" evidence="2">
    <location>
        <begin position="259"/>
        <end position="290"/>
    </location>
</feature>
<feature type="short sequence motif" description="PP-loop motif" evidence="1">
    <location>
        <begin position="36"/>
        <end position="41"/>
    </location>
</feature>
<feature type="compositionally biased region" description="Acidic residues" evidence="2">
    <location>
        <begin position="262"/>
        <end position="273"/>
    </location>
</feature>
<feature type="binding site" evidence="1">
    <location>
        <position position="111"/>
    </location>
    <ligand>
        <name>[4Fe-4S] cluster</name>
        <dbReference type="ChEBI" id="CHEBI:49883"/>
    </ligand>
</feature>
<feature type="binding site" evidence="1">
    <location>
        <position position="114"/>
    </location>
    <ligand>
        <name>[4Fe-4S] cluster</name>
        <dbReference type="ChEBI" id="CHEBI:49883"/>
    </ligand>
</feature>
<feature type="binding site" evidence="1">
    <location>
        <position position="202"/>
    </location>
    <ligand>
        <name>[4Fe-4S] cluster</name>
        <dbReference type="ChEBI" id="CHEBI:49883"/>
    </ligand>
</feature>
<accession>Q2IPE3</accession>
<protein>
    <recommendedName>
        <fullName evidence="1">tRNA-cytidine(32) 2-sulfurtransferase</fullName>
        <ecNumber evidence="1">2.8.1.-</ecNumber>
    </recommendedName>
    <alternativeName>
        <fullName evidence="1">Two-thiocytidine biosynthesis protein A</fullName>
    </alternativeName>
    <alternativeName>
        <fullName evidence="1">tRNA 2-thiocytidine biosynthesis protein TtcA</fullName>
    </alternativeName>
</protein>
<keyword id="KW-0004">4Fe-4S</keyword>
<keyword id="KW-0067">ATP-binding</keyword>
<keyword id="KW-0963">Cytoplasm</keyword>
<keyword id="KW-0408">Iron</keyword>
<keyword id="KW-0411">Iron-sulfur</keyword>
<keyword id="KW-0460">Magnesium</keyword>
<keyword id="KW-0479">Metal-binding</keyword>
<keyword id="KW-0547">Nucleotide-binding</keyword>
<keyword id="KW-1185">Reference proteome</keyword>
<keyword id="KW-0694">RNA-binding</keyword>
<keyword id="KW-0808">Transferase</keyword>
<keyword id="KW-0819">tRNA processing</keyword>
<keyword id="KW-0820">tRNA-binding</keyword>
<organism>
    <name type="scientific">Anaeromyxobacter dehalogenans (strain 2CP-C)</name>
    <dbReference type="NCBI Taxonomy" id="290397"/>
    <lineage>
        <taxon>Bacteria</taxon>
        <taxon>Pseudomonadati</taxon>
        <taxon>Myxococcota</taxon>
        <taxon>Myxococcia</taxon>
        <taxon>Myxococcales</taxon>
        <taxon>Cystobacterineae</taxon>
        <taxon>Anaeromyxobacteraceae</taxon>
        <taxon>Anaeromyxobacter</taxon>
    </lineage>
</organism>
<reference key="1">
    <citation type="submission" date="2006-01" db="EMBL/GenBank/DDBJ databases">
        <title>Complete sequence of Anaeromyxobacter dehalogenans 2CP-C.</title>
        <authorList>
            <person name="Copeland A."/>
            <person name="Lucas S."/>
            <person name="Lapidus A."/>
            <person name="Barry K."/>
            <person name="Detter J.C."/>
            <person name="Glavina T."/>
            <person name="Hammon N."/>
            <person name="Israni S."/>
            <person name="Pitluck S."/>
            <person name="Brettin T."/>
            <person name="Bruce D."/>
            <person name="Han C."/>
            <person name="Tapia R."/>
            <person name="Gilna P."/>
            <person name="Kiss H."/>
            <person name="Schmutz J."/>
            <person name="Larimer F."/>
            <person name="Land M."/>
            <person name="Kyrpides N."/>
            <person name="Anderson I."/>
            <person name="Sanford R.A."/>
            <person name="Ritalahti K.M."/>
            <person name="Thomas H.S."/>
            <person name="Kirby J.R."/>
            <person name="Zhulin I.B."/>
            <person name="Loeffler F.E."/>
            <person name="Richardson P."/>
        </authorList>
    </citation>
    <scope>NUCLEOTIDE SEQUENCE [LARGE SCALE GENOMIC DNA]</scope>
    <source>
        <strain>2CP-C</strain>
    </source>
</reference>
<comment type="function">
    <text evidence="1">Catalyzes the ATP-dependent 2-thiolation of cytidine in position 32 of tRNA, to form 2-thiocytidine (s(2)C32). The sulfur atoms are provided by the cysteine/cysteine desulfurase (IscS) system.</text>
</comment>
<comment type="catalytic activity">
    <reaction evidence="1">
        <text>cytidine(32) in tRNA + S-sulfanyl-L-cysteinyl-[cysteine desulfurase] + AH2 + ATP = 2-thiocytidine(32) in tRNA + L-cysteinyl-[cysteine desulfurase] + A + AMP + diphosphate + H(+)</text>
        <dbReference type="Rhea" id="RHEA:57048"/>
        <dbReference type="Rhea" id="RHEA-COMP:10288"/>
        <dbReference type="Rhea" id="RHEA-COMP:12157"/>
        <dbReference type="Rhea" id="RHEA-COMP:12158"/>
        <dbReference type="Rhea" id="RHEA-COMP:14821"/>
        <dbReference type="ChEBI" id="CHEBI:13193"/>
        <dbReference type="ChEBI" id="CHEBI:15378"/>
        <dbReference type="ChEBI" id="CHEBI:17499"/>
        <dbReference type="ChEBI" id="CHEBI:29950"/>
        <dbReference type="ChEBI" id="CHEBI:30616"/>
        <dbReference type="ChEBI" id="CHEBI:33019"/>
        <dbReference type="ChEBI" id="CHEBI:61963"/>
        <dbReference type="ChEBI" id="CHEBI:82748"/>
        <dbReference type="ChEBI" id="CHEBI:141453"/>
        <dbReference type="ChEBI" id="CHEBI:456215"/>
    </reaction>
    <physiologicalReaction direction="left-to-right" evidence="1">
        <dbReference type="Rhea" id="RHEA:57049"/>
    </physiologicalReaction>
</comment>
<comment type="cofactor">
    <cofactor evidence="1">
        <name>Mg(2+)</name>
        <dbReference type="ChEBI" id="CHEBI:18420"/>
    </cofactor>
</comment>
<comment type="cofactor">
    <cofactor evidence="1">
        <name>[4Fe-4S] cluster</name>
        <dbReference type="ChEBI" id="CHEBI:49883"/>
    </cofactor>
    <text evidence="1">Binds 1 [4Fe-4S] cluster per subunit. The cluster is chelated by three Cys residues, the fourth Fe has a free coordination site that may bind a sulfur atom transferred from the persulfide of IscS.</text>
</comment>
<comment type="pathway">
    <text evidence="1">tRNA modification.</text>
</comment>
<comment type="subunit">
    <text evidence="1">Homodimer.</text>
</comment>
<comment type="subcellular location">
    <subcellularLocation>
        <location evidence="1">Cytoplasm</location>
    </subcellularLocation>
</comment>
<comment type="miscellaneous">
    <text evidence="1">The thiolation reaction likely consists of two steps: a first activation step by ATP to form an adenylated intermediate of the target base of tRNA, and a second nucleophilic substitution step of the sulfur (S) atom supplied by the hydrosulfide attached to the Fe-S cluster.</text>
</comment>
<comment type="similarity">
    <text evidence="1">Belongs to the TtcA family.</text>
</comment>
<gene>
    <name evidence="1" type="primary">ttcA</name>
    <name type="ordered locus">Adeh_0903</name>
</gene>